<sequence length="466" mass="52124">MATIPGGGTIMDPMHLYRARRDKERRGVLKTYKILGFISSGTYGRVYKAVLLPPPKTASAKSALPSSTRAALSLPKDKLPSPSFTEDSDPLNNPEMCMRPGDRPAKRGDVFAIKKFKPDKEGDVLTYAGISQSGAREIMLNRELHHRNLVSLREVILEDKSIYMVFEYAEHDFLQIIHYHSQTARASIPPSTLRRLLHQLLCGVHFLHSNFVLHRDLKPANILVTSQGVVKIGDLGLARLWHKPLAQQGLYGGDKVVVTIWYRAPELILGAKHYTAAVDIWAVGCIYAELLSLRPIFKGDEAKMDGKKSLPFQRDQMGKICEVLGPVKPEQWPGIVHMPEYRTYQATGPYPHSNPLAPWYHARSNSSEGYDILVKMFEWDPARRITARDALRHPWFQEEGGVDTKSVFEGSSITYPTRRVTHEDNGDAKMGSLPQSMAGGRLPSSSNFRPASGNIVQPAARKKARI</sequence>
<comment type="function">
    <text evidence="1">Component of the SRB8-11 complex. The SRB8-11 complex is a regulatory module of the Mediator complex which is itself involved in regulation of basal and activated RNA polymerase II-dependent transcription. The SRB8-11 complex may be involved in the transcriptional repression of a subset of genes regulated by Mediator. It may inhibit the association of the Mediator complex with RNA polymerase II to form the holoenzyme complex. The SRB8-11 complex phosphorylates the C-terminal domain (CTD) of the largest subunit of RNA polymerase II (By similarity).</text>
</comment>
<comment type="catalytic activity">
    <reaction>
        <text>L-seryl-[protein] + ATP = O-phospho-L-seryl-[protein] + ADP + H(+)</text>
        <dbReference type="Rhea" id="RHEA:17989"/>
        <dbReference type="Rhea" id="RHEA-COMP:9863"/>
        <dbReference type="Rhea" id="RHEA-COMP:11604"/>
        <dbReference type="ChEBI" id="CHEBI:15378"/>
        <dbReference type="ChEBI" id="CHEBI:29999"/>
        <dbReference type="ChEBI" id="CHEBI:30616"/>
        <dbReference type="ChEBI" id="CHEBI:83421"/>
        <dbReference type="ChEBI" id="CHEBI:456216"/>
        <dbReference type="EC" id="2.7.11.22"/>
    </reaction>
</comment>
<comment type="catalytic activity">
    <reaction>
        <text>L-threonyl-[protein] + ATP = O-phospho-L-threonyl-[protein] + ADP + H(+)</text>
        <dbReference type="Rhea" id="RHEA:46608"/>
        <dbReference type="Rhea" id="RHEA-COMP:11060"/>
        <dbReference type="Rhea" id="RHEA-COMP:11605"/>
        <dbReference type="ChEBI" id="CHEBI:15378"/>
        <dbReference type="ChEBI" id="CHEBI:30013"/>
        <dbReference type="ChEBI" id="CHEBI:30616"/>
        <dbReference type="ChEBI" id="CHEBI:61977"/>
        <dbReference type="ChEBI" id="CHEBI:456216"/>
        <dbReference type="EC" id="2.7.11.22"/>
    </reaction>
</comment>
<comment type="catalytic activity">
    <reaction>
        <text>[DNA-directed RNA polymerase] + ATP = phospho-[DNA-directed RNA polymerase] + ADP + H(+)</text>
        <dbReference type="Rhea" id="RHEA:10216"/>
        <dbReference type="Rhea" id="RHEA-COMP:11321"/>
        <dbReference type="Rhea" id="RHEA-COMP:11322"/>
        <dbReference type="ChEBI" id="CHEBI:15378"/>
        <dbReference type="ChEBI" id="CHEBI:30616"/>
        <dbReference type="ChEBI" id="CHEBI:43176"/>
        <dbReference type="ChEBI" id="CHEBI:68546"/>
        <dbReference type="ChEBI" id="CHEBI:456216"/>
        <dbReference type="EC" id="2.7.11.23"/>
    </reaction>
</comment>
<comment type="cofactor">
    <cofactor evidence="1">
        <name>Mg(2+)</name>
        <dbReference type="ChEBI" id="CHEBI:18420"/>
    </cofactor>
</comment>
<comment type="subunit">
    <text evidence="1">Component of the SRB8-11 complex, a regulatory module of the Mediator complex.</text>
</comment>
<comment type="subcellular location">
    <subcellularLocation>
        <location evidence="5">Nucleus</location>
    </subcellularLocation>
</comment>
<comment type="similarity">
    <text evidence="5">Belongs to the protein kinase superfamily. CMGC Ser/Thr protein kinase family. CDC2/CDKX subfamily.</text>
</comment>
<accession>P0CS76</accession>
<accession>Q55ID8</accession>
<accession>Q5K7X7</accession>
<gene>
    <name type="primary">SSN3</name>
    <name type="synonym">CDK8</name>
    <name type="ordered locus">CNM00930</name>
</gene>
<feature type="chain" id="PRO_0000312942" description="Serine/threonine-protein kinase SSN3">
    <location>
        <begin position="1"/>
        <end position="466"/>
    </location>
</feature>
<feature type="domain" description="Protein kinase" evidence="2">
    <location>
        <begin position="32"/>
        <end position="396"/>
    </location>
</feature>
<feature type="region of interest" description="Disordered" evidence="4">
    <location>
        <begin position="58"/>
        <end position="105"/>
    </location>
</feature>
<feature type="region of interest" description="Disordered" evidence="4">
    <location>
        <begin position="421"/>
        <end position="466"/>
    </location>
</feature>
<feature type="active site" description="Proton acceptor" evidence="2 3">
    <location>
        <position position="216"/>
    </location>
</feature>
<feature type="binding site" evidence="2">
    <location>
        <begin position="38"/>
        <end position="46"/>
    </location>
    <ligand>
        <name>ATP</name>
        <dbReference type="ChEBI" id="CHEBI:30616"/>
    </ligand>
</feature>
<feature type="binding site" evidence="2">
    <location>
        <position position="114"/>
    </location>
    <ligand>
        <name>ATP</name>
        <dbReference type="ChEBI" id="CHEBI:30616"/>
    </ligand>
</feature>
<keyword id="KW-0010">Activator</keyword>
<keyword id="KW-0067">ATP-binding</keyword>
<keyword id="KW-0418">Kinase</keyword>
<keyword id="KW-0460">Magnesium</keyword>
<keyword id="KW-0479">Metal-binding</keyword>
<keyword id="KW-0547">Nucleotide-binding</keyword>
<keyword id="KW-0539">Nucleus</keyword>
<keyword id="KW-1185">Reference proteome</keyword>
<keyword id="KW-0678">Repressor</keyword>
<keyword id="KW-0723">Serine/threonine-protein kinase</keyword>
<keyword id="KW-0804">Transcription</keyword>
<keyword id="KW-0805">Transcription regulation</keyword>
<keyword id="KW-0808">Transferase</keyword>
<reference key="1">
    <citation type="journal article" date="2005" name="Science">
        <title>The genome of the basidiomycetous yeast and human pathogen Cryptococcus neoformans.</title>
        <authorList>
            <person name="Loftus B.J."/>
            <person name="Fung E."/>
            <person name="Roncaglia P."/>
            <person name="Rowley D."/>
            <person name="Amedeo P."/>
            <person name="Bruno D."/>
            <person name="Vamathevan J."/>
            <person name="Miranda M."/>
            <person name="Anderson I.J."/>
            <person name="Fraser J.A."/>
            <person name="Allen J.E."/>
            <person name="Bosdet I.E."/>
            <person name="Brent M.R."/>
            <person name="Chiu R."/>
            <person name="Doering T.L."/>
            <person name="Donlin M.J."/>
            <person name="D'Souza C.A."/>
            <person name="Fox D.S."/>
            <person name="Grinberg V."/>
            <person name="Fu J."/>
            <person name="Fukushima M."/>
            <person name="Haas B.J."/>
            <person name="Huang J.C."/>
            <person name="Janbon G."/>
            <person name="Jones S.J.M."/>
            <person name="Koo H.L."/>
            <person name="Krzywinski M.I."/>
            <person name="Kwon-Chung K.J."/>
            <person name="Lengeler K.B."/>
            <person name="Maiti R."/>
            <person name="Marra M.A."/>
            <person name="Marra R.E."/>
            <person name="Mathewson C.A."/>
            <person name="Mitchell T.G."/>
            <person name="Pertea M."/>
            <person name="Riggs F.R."/>
            <person name="Salzberg S.L."/>
            <person name="Schein J.E."/>
            <person name="Shvartsbeyn A."/>
            <person name="Shin H."/>
            <person name="Shumway M."/>
            <person name="Specht C.A."/>
            <person name="Suh B.B."/>
            <person name="Tenney A."/>
            <person name="Utterback T.R."/>
            <person name="Wickes B.L."/>
            <person name="Wortman J.R."/>
            <person name="Wye N.H."/>
            <person name="Kronstad J.W."/>
            <person name="Lodge J.K."/>
            <person name="Heitman J."/>
            <person name="Davis R.W."/>
            <person name="Fraser C.M."/>
            <person name="Hyman R.W."/>
        </authorList>
    </citation>
    <scope>NUCLEOTIDE SEQUENCE [LARGE SCALE GENOMIC DNA]</scope>
    <source>
        <strain>JEC21 / ATCC MYA-565</strain>
    </source>
</reference>
<evidence type="ECO:0000250" key="1"/>
<evidence type="ECO:0000255" key="2">
    <source>
        <dbReference type="PROSITE-ProRule" id="PRU00159"/>
    </source>
</evidence>
<evidence type="ECO:0000255" key="3">
    <source>
        <dbReference type="PROSITE-ProRule" id="PRU10027"/>
    </source>
</evidence>
<evidence type="ECO:0000256" key="4">
    <source>
        <dbReference type="SAM" id="MobiDB-lite"/>
    </source>
</evidence>
<evidence type="ECO:0000305" key="5"/>
<name>SSN3_CRYNJ</name>
<proteinExistence type="inferred from homology"/>
<organism>
    <name type="scientific">Cryptococcus neoformans var. neoformans serotype D (strain JEC21 / ATCC MYA-565)</name>
    <name type="common">Filobasidiella neoformans</name>
    <dbReference type="NCBI Taxonomy" id="214684"/>
    <lineage>
        <taxon>Eukaryota</taxon>
        <taxon>Fungi</taxon>
        <taxon>Dikarya</taxon>
        <taxon>Basidiomycota</taxon>
        <taxon>Agaricomycotina</taxon>
        <taxon>Tremellomycetes</taxon>
        <taxon>Tremellales</taxon>
        <taxon>Cryptococcaceae</taxon>
        <taxon>Cryptococcus</taxon>
        <taxon>Cryptococcus neoformans species complex</taxon>
    </lineage>
</organism>
<protein>
    <recommendedName>
        <fullName>Serine/threonine-protein kinase SSN3</fullName>
        <ecNumber>2.7.11.22</ecNumber>
        <ecNumber>2.7.11.23</ecNumber>
    </recommendedName>
    <alternativeName>
        <fullName>Cyclin-dependent kinase 8</fullName>
    </alternativeName>
</protein>
<dbReference type="EC" id="2.7.11.22"/>
<dbReference type="EC" id="2.7.11.23"/>
<dbReference type="EMBL" id="AE017353">
    <property type="protein sequence ID" value="AAW46899.1"/>
    <property type="molecule type" value="Genomic_DNA"/>
</dbReference>
<dbReference type="RefSeq" id="XP_568416.1">
    <property type="nucleotide sequence ID" value="XM_568416.1"/>
</dbReference>
<dbReference type="SMR" id="P0CS76"/>
<dbReference type="FunCoup" id="P0CS76">
    <property type="interactions" value="778"/>
</dbReference>
<dbReference type="STRING" id="214684.P0CS76"/>
<dbReference type="PaxDb" id="214684-P0CS76"/>
<dbReference type="EnsemblFungi" id="AAW46899">
    <property type="protein sequence ID" value="AAW46899"/>
    <property type="gene ID" value="CNM00930"/>
</dbReference>
<dbReference type="GeneID" id="3255225"/>
<dbReference type="KEGG" id="cne:CNM00930"/>
<dbReference type="VEuPathDB" id="FungiDB:CNM00930"/>
<dbReference type="eggNOG" id="KOG0666">
    <property type="taxonomic scope" value="Eukaryota"/>
</dbReference>
<dbReference type="HOGENOM" id="CLU_000288_181_6_1"/>
<dbReference type="InParanoid" id="P0CS76"/>
<dbReference type="OMA" id="YFKNGGP"/>
<dbReference type="OrthoDB" id="6284126at2759"/>
<dbReference type="Proteomes" id="UP000002149">
    <property type="component" value="Chromosome 13"/>
</dbReference>
<dbReference type="GO" id="GO:1990508">
    <property type="term" value="C:CKM complex"/>
    <property type="evidence" value="ECO:0007669"/>
    <property type="project" value="EnsemblFungi"/>
</dbReference>
<dbReference type="GO" id="GO:0016592">
    <property type="term" value="C:mediator complex"/>
    <property type="evidence" value="ECO:0000318"/>
    <property type="project" value="GO_Central"/>
</dbReference>
<dbReference type="GO" id="GO:0005634">
    <property type="term" value="C:nucleus"/>
    <property type="evidence" value="ECO:0000318"/>
    <property type="project" value="GO_Central"/>
</dbReference>
<dbReference type="GO" id="GO:0005524">
    <property type="term" value="F:ATP binding"/>
    <property type="evidence" value="ECO:0007669"/>
    <property type="project" value="UniProtKB-KW"/>
</dbReference>
<dbReference type="GO" id="GO:0004693">
    <property type="term" value="F:cyclin-dependent protein serine/threonine kinase activity"/>
    <property type="evidence" value="ECO:0000318"/>
    <property type="project" value="GO_Central"/>
</dbReference>
<dbReference type="GO" id="GO:0046872">
    <property type="term" value="F:metal ion binding"/>
    <property type="evidence" value="ECO:0007669"/>
    <property type="project" value="UniProtKB-KW"/>
</dbReference>
<dbReference type="GO" id="GO:0106310">
    <property type="term" value="F:protein serine kinase activity"/>
    <property type="evidence" value="ECO:0007669"/>
    <property type="project" value="RHEA"/>
</dbReference>
<dbReference type="GO" id="GO:0008353">
    <property type="term" value="F:RNA polymerase II CTD heptapeptide repeat kinase activity"/>
    <property type="evidence" value="ECO:0007669"/>
    <property type="project" value="UniProtKB-EC"/>
</dbReference>
<dbReference type="GO" id="GO:0060258">
    <property type="term" value="P:negative regulation of filamentous growth"/>
    <property type="evidence" value="ECO:0007669"/>
    <property type="project" value="EnsemblFungi"/>
</dbReference>
<dbReference type="GO" id="GO:0000122">
    <property type="term" value="P:negative regulation of transcription by RNA polymerase II"/>
    <property type="evidence" value="ECO:0007669"/>
    <property type="project" value="EnsemblFungi"/>
</dbReference>
<dbReference type="GO" id="GO:0070481">
    <property type="term" value="P:nuclear-transcribed mRNA catabolic process, non-stop decay"/>
    <property type="evidence" value="ECO:0007669"/>
    <property type="project" value="EnsemblFungi"/>
</dbReference>
<dbReference type="GO" id="GO:0045944">
    <property type="term" value="P:positive regulation of transcription by RNA polymerase II"/>
    <property type="evidence" value="ECO:0007669"/>
    <property type="project" value="EnsemblFungi"/>
</dbReference>
<dbReference type="GO" id="GO:0031648">
    <property type="term" value="P:protein destabilization"/>
    <property type="evidence" value="ECO:0007669"/>
    <property type="project" value="EnsemblFungi"/>
</dbReference>
<dbReference type="CDD" id="cd07842">
    <property type="entry name" value="STKc_CDK8_like"/>
    <property type="match status" value="1"/>
</dbReference>
<dbReference type="FunFam" id="1.10.510.10:FF:000408">
    <property type="entry name" value="Serine/threonine-protein kinase SSN3"/>
    <property type="match status" value="1"/>
</dbReference>
<dbReference type="FunFam" id="3.30.200.20:FF:000757">
    <property type="entry name" value="Serine/threonine-protein kinase SSN3"/>
    <property type="match status" value="1"/>
</dbReference>
<dbReference type="Gene3D" id="3.30.200.20">
    <property type="entry name" value="Phosphorylase Kinase, domain 1"/>
    <property type="match status" value="1"/>
</dbReference>
<dbReference type="Gene3D" id="1.10.510.10">
    <property type="entry name" value="Transferase(Phosphotransferase) domain 1"/>
    <property type="match status" value="1"/>
</dbReference>
<dbReference type="InterPro" id="IPR050108">
    <property type="entry name" value="CDK"/>
</dbReference>
<dbReference type="InterPro" id="IPR011009">
    <property type="entry name" value="Kinase-like_dom_sf"/>
</dbReference>
<dbReference type="InterPro" id="IPR000719">
    <property type="entry name" value="Prot_kinase_dom"/>
</dbReference>
<dbReference type="InterPro" id="IPR008271">
    <property type="entry name" value="Ser/Thr_kinase_AS"/>
</dbReference>
<dbReference type="PANTHER" id="PTHR24056">
    <property type="entry name" value="CELL DIVISION PROTEIN KINASE"/>
    <property type="match status" value="1"/>
</dbReference>
<dbReference type="PANTHER" id="PTHR24056:SF495">
    <property type="entry name" value="CYCLIN-DEPENDENT KINASE 8-RELATED"/>
    <property type="match status" value="1"/>
</dbReference>
<dbReference type="Pfam" id="PF00069">
    <property type="entry name" value="Pkinase"/>
    <property type="match status" value="1"/>
</dbReference>
<dbReference type="SMART" id="SM00220">
    <property type="entry name" value="S_TKc"/>
    <property type="match status" value="1"/>
</dbReference>
<dbReference type="SUPFAM" id="SSF56112">
    <property type="entry name" value="Protein kinase-like (PK-like)"/>
    <property type="match status" value="1"/>
</dbReference>
<dbReference type="PROSITE" id="PS50011">
    <property type="entry name" value="PROTEIN_KINASE_DOM"/>
    <property type="match status" value="1"/>
</dbReference>
<dbReference type="PROSITE" id="PS00108">
    <property type="entry name" value="PROTEIN_KINASE_ST"/>
    <property type="match status" value="1"/>
</dbReference>